<evidence type="ECO:0000255" key="1">
    <source>
        <dbReference type="HAMAP-Rule" id="MF_00409"/>
    </source>
</evidence>
<dbReference type="EC" id="2.7.1.130" evidence="1"/>
<dbReference type="EMBL" id="CP000362">
    <property type="protein sequence ID" value="ABG30019.1"/>
    <property type="molecule type" value="Genomic_DNA"/>
</dbReference>
<dbReference type="RefSeq" id="WP_011566641.1">
    <property type="nucleotide sequence ID" value="NC_008209.1"/>
</dbReference>
<dbReference type="SMR" id="Q16DC4"/>
<dbReference type="STRING" id="375451.RD1_0294"/>
<dbReference type="KEGG" id="rde:RD1_0294"/>
<dbReference type="eggNOG" id="COG1663">
    <property type="taxonomic scope" value="Bacteria"/>
</dbReference>
<dbReference type="HOGENOM" id="CLU_038816_0_0_5"/>
<dbReference type="OrthoDB" id="9766423at2"/>
<dbReference type="UniPathway" id="UPA00359">
    <property type="reaction ID" value="UER00482"/>
</dbReference>
<dbReference type="Proteomes" id="UP000007029">
    <property type="component" value="Chromosome"/>
</dbReference>
<dbReference type="GO" id="GO:0005886">
    <property type="term" value="C:plasma membrane"/>
    <property type="evidence" value="ECO:0007669"/>
    <property type="project" value="TreeGrafter"/>
</dbReference>
<dbReference type="GO" id="GO:0005524">
    <property type="term" value="F:ATP binding"/>
    <property type="evidence" value="ECO:0007669"/>
    <property type="project" value="UniProtKB-UniRule"/>
</dbReference>
<dbReference type="GO" id="GO:0009029">
    <property type="term" value="F:tetraacyldisaccharide 4'-kinase activity"/>
    <property type="evidence" value="ECO:0007669"/>
    <property type="project" value="UniProtKB-UniRule"/>
</dbReference>
<dbReference type="GO" id="GO:0009245">
    <property type="term" value="P:lipid A biosynthetic process"/>
    <property type="evidence" value="ECO:0007669"/>
    <property type="project" value="UniProtKB-UniRule"/>
</dbReference>
<dbReference type="GO" id="GO:0009244">
    <property type="term" value="P:lipopolysaccharide core region biosynthetic process"/>
    <property type="evidence" value="ECO:0007669"/>
    <property type="project" value="TreeGrafter"/>
</dbReference>
<dbReference type="HAMAP" id="MF_00409">
    <property type="entry name" value="LpxK"/>
    <property type="match status" value="1"/>
</dbReference>
<dbReference type="InterPro" id="IPR003758">
    <property type="entry name" value="LpxK"/>
</dbReference>
<dbReference type="NCBIfam" id="TIGR00682">
    <property type="entry name" value="lpxK"/>
    <property type="match status" value="1"/>
</dbReference>
<dbReference type="PANTHER" id="PTHR42724">
    <property type="entry name" value="TETRAACYLDISACCHARIDE 4'-KINASE"/>
    <property type="match status" value="1"/>
</dbReference>
<dbReference type="PANTHER" id="PTHR42724:SF1">
    <property type="entry name" value="TETRAACYLDISACCHARIDE 4'-KINASE, MITOCHONDRIAL-RELATED"/>
    <property type="match status" value="1"/>
</dbReference>
<dbReference type="Pfam" id="PF02606">
    <property type="entry name" value="LpxK"/>
    <property type="match status" value="1"/>
</dbReference>
<proteinExistence type="inferred from homology"/>
<protein>
    <recommendedName>
        <fullName evidence="1">Tetraacyldisaccharide 4'-kinase</fullName>
        <ecNumber evidence="1">2.7.1.130</ecNumber>
    </recommendedName>
    <alternativeName>
        <fullName evidence="1">Lipid A 4'-kinase</fullName>
    </alternativeName>
</protein>
<sequence length="331" mass="35188">MRAPDFWYTPPQAPALLARLLQPFGKIYGMATARRLAKGTPVKLDVPVICVGNLNAGGTGKTPTVIAVLTTLMDMLETPHVVTRGYGGSLKGPVRVDPSKHTAKQVGDEPLLLAAFAEVWVARDRAAGCAAAAQGGASVVVLDDGFQNPSVHKDFSLIVVDAEKGFGNGRCLPAGPLREPVDIGLKRADALLSVGAAEAQARFDSSTLPTDLPHIRGALTPLQTGMDWSDMRAIAFAGIAHPEKFFATLRALGANVVHSEPLDDHQPLSTALMSRLEADAKRQNAQLVTTEKDAARLPNSFRTKVITLPVRLSFDGQENALADLLRPVVKS</sequence>
<name>LPXK_ROSDO</name>
<feature type="chain" id="PRO_0000291238" description="Tetraacyldisaccharide 4'-kinase">
    <location>
        <begin position="1"/>
        <end position="331"/>
    </location>
</feature>
<feature type="binding site" evidence="1">
    <location>
        <begin position="55"/>
        <end position="62"/>
    </location>
    <ligand>
        <name>ATP</name>
        <dbReference type="ChEBI" id="CHEBI:30616"/>
    </ligand>
</feature>
<comment type="function">
    <text evidence="1">Transfers the gamma-phosphate of ATP to the 4'-position of a tetraacyldisaccharide 1-phosphate intermediate (termed DS-1-P) to form tetraacyldisaccharide 1,4'-bis-phosphate (lipid IVA).</text>
</comment>
<comment type="catalytic activity">
    <reaction evidence="1">
        <text>a lipid A disaccharide + ATP = a lipid IVA + ADP + H(+)</text>
        <dbReference type="Rhea" id="RHEA:67840"/>
        <dbReference type="ChEBI" id="CHEBI:15378"/>
        <dbReference type="ChEBI" id="CHEBI:30616"/>
        <dbReference type="ChEBI" id="CHEBI:176343"/>
        <dbReference type="ChEBI" id="CHEBI:176425"/>
        <dbReference type="ChEBI" id="CHEBI:456216"/>
        <dbReference type="EC" id="2.7.1.130"/>
    </reaction>
</comment>
<comment type="pathway">
    <text evidence="1">Glycolipid biosynthesis; lipid IV(A) biosynthesis; lipid IV(A) from (3R)-3-hydroxytetradecanoyl-[acyl-carrier-protein] and UDP-N-acetyl-alpha-D-glucosamine: step 6/6.</text>
</comment>
<comment type="similarity">
    <text evidence="1">Belongs to the LpxK family.</text>
</comment>
<gene>
    <name evidence="1" type="primary">lpxK</name>
    <name type="ordered locus">RD1_0294</name>
</gene>
<organism>
    <name type="scientific">Roseobacter denitrificans (strain ATCC 33942 / OCh 114)</name>
    <name type="common">Erythrobacter sp. (strain OCh 114)</name>
    <name type="synonym">Roseobacter denitrificans</name>
    <dbReference type="NCBI Taxonomy" id="375451"/>
    <lineage>
        <taxon>Bacteria</taxon>
        <taxon>Pseudomonadati</taxon>
        <taxon>Pseudomonadota</taxon>
        <taxon>Alphaproteobacteria</taxon>
        <taxon>Rhodobacterales</taxon>
        <taxon>Roseobacteraceae</taxon>
        <taxon>Roseobacter</taxon>
    </lineage>
</organism>
<keyword id="KW-0067">ATP-binding</keyword>
<keyword id="KW-0418">Kinase</keyword>
<keyword id="KW-0441">Lipid A biosynthesis</keyword>
<keyword id="KW-0444">Lipid biosynthesis</keyword>
<keyword id="KW-0443">Lipid metabolism</keyword>
<keyword id="KW-0547">Nucleotide-binding</keyword>
<keyword id="KW-1185">Reference proteome</keyword>
<keyword id="KW-0808">Transferase</keyword>
<accession>Q16DC4</accession>
<reference key="1">
    <citation type="journal article" date="2007" name="J. Bacteriol.">
        <title>The complete genome sequence of Roseobacter denitrificans reveals a mixotrophic rather than photosynthetic metabolism.</title>
        <authorList>
            <person name="Swingley W.D."/>
            <person name="Sadekar S."/>
            <person name="Mastrian S.D."/>
            <person name="Matthies H.J."/>
            <person name="Hao J."/>
            <person name="Ramos H."/>
            <person name="Acharya C.R."/>
            <person name="Conrad A.L."/>
            <person name="Taylor H.L."/>
            <person name="Dejesa L.C."/>
            <person name="Shah M.K."/>
            <person name="O'Huallachain M.E."/>
            <person name="Lince M.T."/>
            <person name="Blankenship R.E."/>
            <person name="Beatty J.T."/>
            <person name="Touchman J.W."/>
        </authorList>
    </citation>
    <scope>NUCLEOTIDE SEQUENCE [LARGE SCALE GENOMIC DNA]</scope>
    <source>
        <strain>ATCC 33942 / OCh 114</strain>
    </source>
</reference>